<comment type="function">
    <text evidence="1">Involved in the heme biosynthesis. Catalyzes the aerobic oxidative decarboxylation of propionate groups of rings A and B of coproporphyrinogen-III to yield the vinyl groups in protoporphyrinogen-IX.</text>
</comment>
<comment type="catalytic activity">
    <reaction evidence="1">
        <text>coproporphyrinogen III + O2 + 2 H(+) = protoporphyrinogen IX + 2 CO2 + 2 H2O</text>
        <dbReference type="Rhea" id="RHEA:18257"/>
        <dbReference type="ChEBI" id="CHEBI:15377"/>
        <dbReference type="ChEBI" id="CHEBI:15378"/>
        <dbReference type="ChEBI" id="CHEBI:15379"/>
        <dbReference type="ChEBI" id="CHEBI:16526"/>
        <dbReference type="ChEBI" id="CHEBI:57307"/>
        <dbReference type="ChEBI" id="CHEBI:57309"/>
        <dbReference type="EC" id="1.3.3.3"/>
    </reaction>
</comment>
<comment type="cofactor">
    <cofactor evidence="1">
        <name>a divalent metal cation</name>
        <dbReference type="ChEBI" id="CHEBI:60240"/>
    </cofactor>
</comment>
<comment type="pathway">
    <text evidence="1">Porphyrin-containing compound metabolism; protoporphyrin-IX biosynthesis; protoporphyrinogen-IX from coproporphyrinogen-III (O2 route): step 1/1.</text>
</comment>
<comment type="subunit">
    <text evidence="1">Homodimer.</text>
</comment>
<comment type="subcellular location">
    <subcellularLocation>
        <location evidence="1">Cytoplasm</location>
    </subcellularLocation>
</comment>
<comment type="similarity">
    <text evidence="1">Belongs to the aerobic coproporphyrinogen-III oxidase family.</text>
</comment>
<comment type="sequence caution" evidence="2">
    <conflict type="erroneous initiation">
        <sequence resource="EMBL-CDS" id="AAU27299"/>
    </conflict>
    <text>Extended N-terminus.</text>
</comment>
<dbReference type="EC" id="1.3.3.3" evidence="1"/>
<dbReference type="EMBL" id="AE017354">
    <property type="protein sequence ID" value="AAU27299.1"/>
    <property type="status" value="ALT_INIT"/>
    <property type="molecule type" value="Genomic_DNA"/>
</dbReference>
<dbReference type="RefSeq" id="WP_011946321.1">
    <property type="nucleotide sequence ID" value="NC_002942.5"/>
</dbReference>
<dbReference type="RefSeq" id="YP_095246.1">
    <property type="nucleotide sequence ID" value="NC_002942.5"/>
</dbReference>
<dbReference type="SMR" id="Q5ZW72"/>
<dbReference type="STRING" id="272624.lpg1215"/>
<dbReference type="PaxDb" id="272624-lpg1215"/>
<dbReference type="GeneID" id="57035206"/>
<dbReference type="KEGG" id="lpn:lpg1215"/>
<dbReference type="PATRIC" id="fig|272624.6.peg.1278"/>
<dbReference type="eggNOG" id="COG0408">
    <property type="taxonomic scope" value="Bacteria"/>
</dbReference>
<dbReference type="HOGENOM" id="CLU_026169_0_1_6"/>
<dbReference type="OrthoDB" id="9777553at2"/>
<dbReference type="UniPathway" id="UPA00251">
    <property type="reaction ID" value="UER00322"/>
</dbReference>
<dbReference type="Proteomes" id="UP000000609">
    <property type="component" value="Chromosome"/>
</dbReference>
<dbReference type="GO" id="GO:0005737">
    <property type="term" value="C:cytoplasm"/>
    <property type="evidence" value="ECO:0007669"/>
    <property type="project" value="UniProtKB-SubCell"/>
</dbReference>
<dbReference type="GO" id="GO:0004109">
    <property type="term" value="F:coproporphyrinogen oxidase activity"/>
    <property type="evidence" value="ECO:0007669"/>
    <property type="project" value="UniProtKB-UniRule"/>
</dbReference>
<dbReference type="GO" id="GO:0046872">
    <property type="term" value="F:metal ion binding"/>
    <property type="evidence" value="ECO:0007669"/>
    <property type="project" value="UniProtKB-KW"/>
</dbReference>
<dbReference type="GO" id="GO:0042803">
    <property type="term" value="F:protein homodimerization activity"/>
    <property type="evidence" value="ECO:0000250"/>
    <property type="project" value="UniProtKB"/>
</dbReference>
<dbReference type="GO" id="GO:0006782">
    <property type="term" value="P:protoporphyrinogen IX biosynthetic process"/>
    <property type="evidence" value="ECO:0007669"/>
    <property type="project" value="UniProtKB-UniRule"/>
</dbReference>
<dbReference type="FunFam" id="3.40.1500.10:FF:000001">
    <property type="entry name" value="Oxygen-dependent coproporphyrinogen-III oxidase"/>
    <property type="match status" value="1"/>
</dbReference>
<dbReference type="Gene3D" id="3.40.1500.10">
    <property type="entry name" value="Coproporphyrinogen III oxidase, aerobic"/>
    <property type="match status" value="1"/>
</dbReference>
<dbReference type="HAMAP" id="MF_00333">
    <property type="entry name" value="Coprogen_oxidas"/>
    <property type="match status" value="1"/>
</dbReference>
<dbReference type="InterPro" id="IPR001260">
    <property type="entry name" value="Coprogen_oxidase_aer"/>
</dbReference>
<dbReference type="InterPro" id="IPR036406">
    <property type="entry name" value="Coprogen_oxidase_aer_sf"/>
</dbReference>
<dbReference type="InterPro" id="IPR018375">
    <property type="entry name" value="Coprogen_oxidase_CS"/>
</dbReference>
<dbReference type="NCBIfam" id="NF003727">
    <property type="entry name" value="PRK05330.1"/>
    <property type="match status" value="1"/>
</dbReference>
<dbReference type="PANTHER" id="PTHR10755">
    <property type="entry name" value="COPROPORPHYRINOGEN III OXIDASE, MITOCHONDRIAL"/>
    <property type="match status" value="1"/>
</dbReference>
<dbReference type="PANTHER" id="PTHR10755:SF0">
    <property type="entry name" value="OXYGEN-DEPENDENT COPROPORPHYRINOGEN-III OXIDASE, MITOCHONDRIAL"/>
    <property type="match status" value="1"/>
</dbReference>
<dbReference type="Pfam" id="PF01218">
    <property type="entry name" value="Coprogen_oxidas"/>
    <property type="match status" value="1"/>
</dbReference>
<dbReference type="PIRSF" id="PIRSF000166">
    <property type="entry name" value="Coproporphyri_ox"/>
    <property type="match status" value="1"/>
</dbReference>
<dbReference type="PRINTS" id="PR00073">
    <property type="entry name" value="COPRGNOXDASE"/>
</dbReference>
<dbReference type="SUPFAM" id="SSF102886">
    <property type="entry name" value="Coproporphyrinogen III oxidase"/>
    <property type="match status" value="1"/>
</dbReference>
<dbReference type="PROSITE" id="PS01021">
    <property type="entry name" value="COPROGEN_OXIDASE"/>
    <property type="match status" value="1"/>
</dbReference>
<keyword id="KW-0963">Cytoplasm</keyword>
<keyword id="KW-0350">Heme biosynthesis</keyword>
<keyword id="KW-0479">Metal-binding</keyword>
<keyword id="KW-0560">Oxidoreductase</keyword>
<keyword id="KW-0627">Porphyrin biosynthesis</keyword>
<keyword id="KW-1185">Reference proteome</keyword>
<organism>
    <name type="scientific">Legionella pneumophila subsp. pneumophila (strain Philadelphia 1 / ATCC 33152 / DSM 7513)</name>
    <dbReference type="NCBI Taxonomy" id="272624"/>
    <lineage>
        <taxon>Bacteria</taxon>
        <taxon>Pseudomonadati</taxon>
        <taxon>Pseudomonadota</taxon>
        <taxon>Gammaproteobacteria</taxon>
        <taxon>Legionellales</taxon>
        <taxon>Legionellaceae</taxon>
        <taxon>Legionella</taxon>
    </lineage>
</organism>
<reference key="1">
    <citation type="journal article" date="2004" name="Science">
        <title>The genomic sequence of the accidental pathogen Legionella pneumophila.</title>
        <authorList>
            <person name="Chien M."/>
            <person name="Morozova I."/>
            <person name="Shi S."/>
            <person name="Sheng H."/>
            <person name="Chen J."/>
            <person name="Gomez S.M."/>
            <person name="Asamani G."/>
            <person name="Hill K."/>
            <person name="Nuara J."/>
            <person name="Feder M."/>
            <person name="Rineer J."/>
            <person name="Greenberg J.J."/>
            <person name="Steshenko V."/>
            <person name="Park S.H."/>
            <person name="Zhao B."/>
            <person name="Teplitskaya E."/>
            <person name="Edwards J.R."/>
            <person name="Pampou S."/>
            <person name="Georghiou A."/>
            <person name="Chou I.-C."/>
            <person name="Iannuccilli W."/>
            <person name="Ulz M.E."/>
            <person name="Kim D.H."/>
            <person name="Geringer-Sameth A."/>
            <person name="Goldsberry C."/>
            <person name="Morozov P."/>
            <person name="Fischer S.G."/>
            <person name="Segal G."/>
            <person name="Qu X."/>
            <person name="Rzhetsky A."/>
            <person name="Zhang P."/>
            <person name="Cayanis E."/>
            <person name="De Jong P.J."/>
            <person name="Ju J."/>
            <person name="Kalachikov S."/>
            <person name="Shuman H.A."/>
            <person name="Russo J.J."/>
        </authorList>
    </citation>
    <scope>NUCLEOTIDE SEQUENCE [LARGE SCALE GENOMIC DNA]</scope>
    <source>
        <strain>Philadelphia 1 / ATCC 33152 / DSM 7513</strain>
    </source>
</reference>
<gene>
    <name evidence="1" type="primary">hemF</name>
    <name type="ordered locus">lpg1215</name>
</gene>
<feature type="chain" id="PRO_0000109901" description="Oxygen-dependent coproporphyrinogen-III oxidase">
    <location>
        <begin position="1"/>
        <end position="311"/>
    </location>
</feature>
<feature type="region of interest" description="Important for dimerization" evidence="1">
    <location>
        <begin position="248"/>
        <end position="283"/>
    </location>
</feature>
<feature type="active site" description="Proton donor" evidence="1">
    <location>
        <position position="114"/>
    </location>
</feature>
<feature type="binding site" evidence="1">
    <location>
        <position position="100"/>
    </location>
    <ligand>
        <name>substrate</name>
    </ligand>
</feature>
<feature type="binding site" evidence="1">
    <location>
        <position position="104"/>
    </location>
    <ligand>
        <name>a divalent metal cation</name>
        <dbReference type="ChEBI" id="CHEBI:60240"/>
    </ligand>
</feature>
<feature type="binding site" evidence="1">
    <location>
        <position position="114"/>
    </location>
    <ligand>
        <name>a divalent metal cation</name>
        <dbReference type="ChEBI" id="CHEBI:60240"/>
    </ligand>
</feature>
<feature type="binding site" evidence="1">
    <location>
        <begin position="116"/>
        <end position="118"/>
    </location>
    <ligand>
        <name>substrate</name>
    </ligand>
</feature>
<feature type="binding site" evidence="1">
    <location>
        <position position="153"/>
    </location>
    <ligand>
        <name>a divalent metal cation</name>
        <dbReference type="ChEBI" id="CHEBI:60240"/>
    </ligand>
</feature>
<feature type="binding site" evidence="1">
    <location>
        <position position="183"/>
    </location>
    <ligand>
        <name>a divalent metal cation</name>
        <dbReference type="ChEBI" id="CHEBI:60240"/>
    </ligand>
</feature>
<feature type="binding site" evidence="1">
    <location>
        <begin position="266"/>
        <end position="268"/>
    </location>
    <ligand>
        <name>substrate</name>
    </ligand>
</feature>
<feature type="site" description="Important for dimerization" evidence="1">
    <location>
        <position position="183"/>
    </location>
</feature>
<protein>
    <recommendedName>
        <fullName evidence="1">Oxygen-dependent coproporphyrinogen-III oxidase</fullName>
        <shortName evidence="1">CPO</shortName>
        <shortName evidence="1">Coprogen oxidase</shortName>
        <shortName evidence="1">Coproporphyrinogenase</shortName>
        <ecNumber evidence="1">1.3.3.3</ecNumber>
    </recommendedName>
</protein>
<proteinExistence type="inferred from homology"/>
<accession>Q5ZW72</accession>
<sequence length="311" mass="35820">MPISKTLPYNAIEQIKSYLLQLQNTICVSLESIDGKTRFHEDSWQRAAGGGGKTRIMANGNVFEKAGVNFSHVSGEQLPASASAHREELAGRHFSALGVSLVIHPQNPYVPTTHANVRFFVAEKEDSEPVWWFGGGFDLTPYYGFVEDCEHWHQTALNACLPFGETIYPKFKRWCDDYFFIKHRNEARGIGGLFFDDYNEISFDHSFELMRSIGDHFILAYEPIVARRKDIPFGNREKAFQNYRRGRYAEFNLVYDRGTLFGLQSGGRTESILMSLPPIVHWEYNWHPEKGSDEEKLYTDFLPAKDWLKKE</sequence>
<name>HEM6_LEGPH</name>
<evidence type="ECO:0000255" key="1">
    <source>
        <dbReference type="HAMAP-Rule" id="MF_00333"/>
    </source>
</evidence>
<evidence type="ECO:0000305" key="2"/>